<protein>
    <recommendedName>
        <fullName evidence="1">4-hydroxy-tetrahydrodipicolinate synthase</fullName>
        <shortName evidence="1">HTPA synthase</shortName>
        <ecNumber evidence="1">4.3.3.7</ecNumber>
    </recommendedName>
</protein>
<name>DAPA_EDWI9</name>
<sequence length="293" mass="31134">MFTGSIVALVTPMDDKGNVDRASLRKLVDYHVASGTSAIVAVGTTGESATLSHDEHVNVVLQTLELADGRIPVIAGAGANATAEAIALTECFNHCGVVGCLSVTPYYNKPTQEGLYQHFRAIASCTDLPQILYNVPSRTGCDMLPETVARLAQINNIIAIKEATGNLSRVGQIQDLVNDDRFILLSGDDASALDFMCLGGKGVISVTANVAARQMAEMCRLTLAGDVHAARRLNQSLMPLHRDLFIEANPIPVKWATKVLGLIATDTLRLPLTPLSASARPAVERALQHAGVL</sequence>
<proteinExistence type="inferred from homology"/>
<dbReference type="EC" id="4.3.3.7" evidence="1"/>
<dbReference type="EMBL" id="CP001600">
    <property type="protein sequence ID" value="ACR68408.1"/>
    <property type="molecule type" value="Genomic_DNA"/>
</dbReference>
<dbReference type="RefSeq" id="WP_015870578.1">
    <property type="nucleotide sequence ID" value="NZ_CP169062.1"/>
</dbReference>
<dbReference type="SMR" id="C5B7A2"/>
<dbReference type="STRING" id="67780.B6E78_16295"/>
<dbReference type="GeneID" id="69538222"/>
<dbReference type="KEGG" id="eic:NT01EI_1200"/>
<dbReference type="PATRIC" id="fig|634503.3.peg.1089"/>
<dbReference type="HOGENOM" id="CLU_049343_7_1_6"/>
<dbReference type="OrthoDB" id="9782828at2"/>
<dbReference type="UniPathway" id="UPA00034">
    <property type="reaction ID" value="UER00017"/>
</dbReference>
<dbReference type="Proteomes" id="UP000001485">
    <property type="component" value="Chromosome"/>
</dbReference>
<dbReference type="GO" id="GO:0005829">
    <property type="term" value="C:cytosol"/>
    <property type="evidence" value="ECO:0007669"/>
    <property type="project" value="TreeGrafter"/>
</dbReference>
<dbReference type="GO" id="GO:0008840">
    <property type="term" value="F:4-hydroxy-tetrahydrodipicolinate synthase activity"/>
    <property type="evidence" value="ECO:0007669"/>
    <property type="project" value="UniProtKB-UniRule"/>
</dbReference>
<dbReference type="GO" id="GO:0019877">
    <property type="term" value="P:diaminopimelate biosynthetic process"/>
    <property type="evidence" value="ECO:0007669"/>
    <property type="project" value="UniProtKB-UniRule"/>
</dbReference>
<dbReference type="GO" id="GO:0009089">
    <property type="term" value="P:lysine biosynthetic process via diaminopimelate"/>
    <property type="evidence" value="ECO:0007669"/>
    <property type="project" value="UniProtKB-UniRule"/>
</dbReference>
<dbReference type="CDD" id="cd00950">
    <property type="entry name" value="DHDPS"/>
    <property type="match status" value="1"/>
</dbReference>
<dbReference type="FunFam" id="3.20.20.70:FF:000046">
    <property type="entry name" value="4-hydroxy-tetrahydrodipicolinate synthase"/>
    <property type="match status" value="1"/>
</dbReference>
<dbReference type="Gene3D" id="3.20.20.70">
    <property type="entry name" value="Aldolase class I"/>
    <property type="match status" value="1"/>
</dbReference>
<dbReference type="HAMAP" id="MF_00418">
    <property type="entry name" value="DapA"/>
    <property type="match status" value="1"/>
</dbReference>
<dbReference type="InterPro" id="IPR013785">
    <property type="entry name" value="Aldolase_TIM"/>
</dbReference>
<dbReference type="InterPro" id="IPR005263">
    <property type="entry name" value="DapA"/>
</dbReference>
<dbReference type="InterPro" id="IPR002220">
    <property type="entry name" value="DapA-like"/>
</dbReference>
<dbReference type="InterPro" id="IPR020625">
    <property type="entry name" value="Schiff_base-form_aldolases_AS"/>
</dbReference>
<dbReference type="InterPro" id="IPR020624">
    <property type="entry name" value="Schiff_base-form_aldolases_CS"/>
</dbReference>
<dbReference type="NCBIfam" id="TIGR00674">
    <property type="entry name" value="dapA"/>
    <property type="match status" value="1"/>
</dbReference>
<dbReference type="PANTHER" id="PTHR12128:SF66">
    <property type="entry name" value="4-HYDROXY-2-OXOGLUTARATE ALDOLASE, MITOCHONDRIAL"/>
    <property type="match status" value="1"/>
</dbReference>
<dbReference type="PANTHER" id="PTHR12128">
    <property type="entry name" value="DIHYDRODIPICOLINATE SYNTHASE"/>
    <property type="match status" value="1"/>
</dbReference>
<dbReference type="Pfam" id="PF00701">
    <property type="entry name" value="DHDPS"/>
    <property type="match status" value="1"/>
</dbReference>
<dbReference type="PIRSF" id="PIRSF001365">
    <property type="entry name" value="DHDPS"/>
    <property type="match status" value="1"/>
</dbReference>
<dbReference type="PRINTS" id="PR00146">
    <property type="entry name" value="DHPICSNTHASE"/>
</dbReference>
<dbReference type="SMART" id="SM01130">
    <property type="entry name" value="DHDPS"/>
    <property type="match status" value="1"/>
</dbReference>
<dbReference type="SUPFAM" id="SSF51569">
    <property type="entry name" value="Aldolase"/>
    <property type="match status" value="1"/>
</dbReference>
<dbReference type="PROSITE" id="PS00665">
    <property type="entry name" value="DHDPS_1"/>
    <property type="match status" value="1"/>
</dbReference>
<dbReference type="PROSITE" id="PS00666">
    <property type="entry name" value="DHDPS_2"/>
    <property type="match status" value="1"/>
</dbReference>
<accession>C5B7A2</accession>
<feature type="chain" id="PRO_1000206030" description="4-hydroxy-tetrahydrodipicolinate synthase">
    <location>
        <begin position="1"/>
        <end position="293"/>
    </location>
</feature>
<feature type="active site" description="Proton donor/acceptor" evidence="1">
    <location>
        <position position="133"/>
    </location>
</feature>
<feature type="active site" description="Schiff-base intermediate with substrate" evidence="1">
    <location>
        <position position="161"/>
    </location>
</feature>
<feature type="binding site" evidence="1">
    <location>
        <position position="45"/>
    </location>
    <ligand>
        <name>pyruvate</name>
        <dbReference type="ChEBI" id="CHEBI:15361"/>
    </ligand>
</feature>
<feature type="binding site" evidence="1">
    <location>
        <position position="204"/>
    </location>
    <ligand>
        <name>pyruvate</name>
        <dbReference type="ChEBI" id="CHEBI:15361"/>
    </ligand>
</feature>
<feature type="site" description="Part of a proton relay during catalysis" evidence="1">
    <location>
        <position position="44"/>
    </location>
</feature>
<feature type="site" description="Part of a proton relay during catalysis" evidence="1">
    <location>
        <position position="107"/>
    </location>
</feature>
<comment type="function">
    <text evidence="1">Catalyzes the condensation of (S)-aspartate-beta-semialdehyde [(S)-ASA] and pyruvate to 4-hydroxy-tetrahydrodipicolinate (HTPA).</text>
</comment>
<comment type="catalytic activity">
    <reaction evidence="1">
        <text>L-aspartate 4-semialdehyde + pyruvate = (2S,4S)-4-hydroxy-2,3,4,5-tetrahydrodipicolinate + H2O + H(+)</text>
        <dbReference type="Rhea" id="RHEA:34171"/>
        <dbReference type="ChEBI" id="CHEBI:15361"/>
        <dbReference type="ChEBI" id="CHEBI:15377"/>
        <dbReference type="ChEBI" id="CHEBI:15378"/>
        <dbReference type="ChEBI" id="CHEBI:67139"/>
        <dbReference type="ChEBI" id="CHEBI:537519"/>
        <dbReference type="EC" id="4.3.3.7"/>
    </reaction>
</comment>
<comment type="pathway">
    <text evidence="1">Amino-acid biosynthesis; L-lysine biosynthesis via DAP pathway; (S)-tetrahydrodipicolinate from L-aspartate: step 3/4.</text>
</comment>
<comment type="subunit">
    <text evidence="1">Homotetramer; dimer of dimers.</text>
</comment>
<comment type="subcellular location">
    <subcellularLocation>
        <location evidence="1">Cytoplasm</location>
    </subcellularLocation>
</comment>
<comment type="similarity">
    <text evidence="1">Belongs to the DapA family.</text>
</comment>
<comment type="caution">
    <text evidence="2">Was originally thought to be a dihydrodipicolinate synthase (DHDPS), catalyzing the condensation of (S)-aspartate-beta-semialdehyde [(S)-ASA] and pyruvate to dihydrodipicolinate (DHDP). However, it was shown in E.coli that the product of the enzymatic reaction is not dihydrodipicolinate but in fact (4S)-4-hydroxy-2,3,4,5-tetrahydro-(2S)-dipicolinic acid (HTPA), and that the consecutive dehydration reaction leading to DHDP is not spontaneous but catalyzed by DapB.</text>
</comment>
<reference key="1">
    <citation type="submission" date="2009-03" db="EMBL/GenBank/DDBJ databases">
        <title>Complete genome sequence of Edwardsiella ictaluri 93-146.</title>
        <authorList>
            <person name="Williams M.L."/>
            <person name="Gillaspy A.F."/>
            <person name="Dyer D.W."/>
            <person name="Thune R.L."/>
            <person name="Waldbieser G.C."/>
            <person name="Schuster S.C."/>
            <person name="Gipson J."/>
            <person name="Zaitshik J."/>
            <person name="Landry C."/>
            <person name="Lawrence M.L."/>
        </authorList>
    </citation>
    <scope>NUCLEOTIDE SEQUENCE [LARGE SCALE GENOMIC DNA]</scope>
    <source>
        <strain>93-146</strain>
    </source>
</reference>
<organism>
    <name type="scientific">Edwardsiella ictaluri (strain 93-146)</name>
    <dbReference type="NCBI Taxonomy" id="634503"/>
    <lineage>
        <taxon>Bacteria</taxon>
        <taxon>Pseudomonadati</taxon>
        <taxon>Pseudomonadota</taxon>
        <taxon>Gammaproteobacteria</taxon>
        <taxon>Enterobacterales</taxon>
        <taxon>Hafniaceae</taxon>
        <taxon>Edwardsiella</taxon>
    </lineage>
</organism>
<gene>
    <name evidence="1" type="primary">dapA</name>
    <name type="ordered locus">NT01EI_1200</name>
</gene>
<evidence type="ECO:0000255" key="1">
    <source>
        <dbReference type="HAMAP-Rule" id="MF_00418"/>
    </source>
</evidence>
<evidence type="ECO:0000305" key="2"/>
<keyword id="KW-0028">Amino-acid biosynthesis</keyword>
<keyword id="KW-0963">Cytoplasm</keyword>
<keyword id="KW-0220">Diaminopimelate biosynthesis</keyword>
<keyword id="KW-0456">Lyase</keyword>
<keyword id="KW-0457">Lysine biosynthesis</keyword>
<keyword id="KW-0704">Schiff base</keyword>